<accession>Q9CE86</accession>
<gene>
    <name evidence="1" type="primary">hslO</name>
    <name type="ordered locus">LL1959</name>
    <name type="ORF">L17654</name>
</gene>
<protein>
    <recommendedName>
        <fullName evidence="1">33 kDa chaperonin</fullName>
    </recommendedName>
    <alternativeName>
        <fullName evidence="1">Heat shock protein 33 homolog</fullName>
        <shortName evidence="1">HSP33</shortName>
    </alternativeName>
</protein>
<dbReference type="EMBL" id="AE005176">
    <property type="protein sequence ID" value="AAK06057.1"/>
    <property type="status" value="ALT_INIT"/>
    <property type="molecule type" value="Genomic_DNA"/>
</dbReference>
<dbReference type="PIR" id="G86869">
    <property type="entry name" value="G86869"/>
</dbReference>
<dbReference type="RefSeq" id="NP_268116.2">
    <property type="nucleotide sequence ID" value="NC_002662.1"/>
</dbReference>
<dbReference type="RefSeq" id="WP_010906231.1">
    <property type="nucleotide sequence ID" value="NC_002662.1"/>
</dbReference>
<dbReference type="SMR" id="Q9CE86"/>
<dbReference type="PaxDb" id="272623-L17654"/>
<dbReference type="EnsemblBacteria" id="AAK06057">
    <property type="protein sequence ID" value="AAK06057"/>
    <property type="gene ID" value="L17654"/>
</dbReference>
<dbReference type="KEGG" id="lla:L17654"/>
<dbReference type="PATRIC" id="fig|272623.7.peg.2109"/>
<dbReference type="eggNOG" id="COG1281">
    <property type="taxonomic scope" value="Bacteria"/>
</dbReference>
<dbReference type="HOGENOM" id="CLU_054493_1_0_9"/>
<dbReference type="OrthoDB" id="9776534at2"/>
<dbReference type="Proteomes" id="UP000002196">
    <property type="component" value="Chromosome"/>
</dbReference>
<dbReference type="GO" id="GO:0005737">
    <property type="term" value="C:cytoplasm"/>
    <property type="evidence" value="ECO:0007669"/>
    <property type="project" value="UniProtKB-SubCell"/>
</dbReference>
<dbReference type="GO" id="GO:0044183">
    <property type="term" value="F:protein folding chaperone"/>
    <property type="evidence" value="ECO:0007669"/>
    <property type="project" value="TreeGrafter"/>
</dbReference>
<dbReference type="GO" id="GO:0051082">
    <property type="term" value="F:unfolded protein binding"/>
    <property type="evidence" value="ECO:0007669"/>
    <property type="project" value="UniProtKB-UniRule"/>
</dbReference>
<dbReference type="GO" id="GO:0042026">
    <property type="term" value="P:protein refolding"/>
    <property type="evidence" value="ECO:0007669"/>
    <property type="project" value="TreeGrafter"/>
</dbReference>
<dbReference type="CDD" id="cd00498">
    <property type="entry name" value="Hsp33"/>
    <property type="match status" value="1"/>
</dbReference>
<dbReference type="Gene3D" id="3.55.30.10">
    <property type="entry name" value="Hsp33 domain"/>
    <property type="match status" value="1"/>
</dbReference>
<dbReference type="Gene3D" id="3.90.1280.10">
    <property type="entry name" value="HSP33 redox switch-like"/>
    <property type="match status" value="1"/>
</dbReference>
<dbReference type="HAMAP" id="MF_00117">
    <property type="entry name" value="HslO"/>
    <property type="match status" value="1"/>
</dbReference>
<dbReference type="InterPro" id="IPR000397">
    <property type="entry name" value="Heat_shock_Hsp33"/>
</dbReference>
<dbReference type="InterPro" id="IPR016154">
    <property type="entry name" value="Heat_shock_Hsp33_C"/>
</dbReference>
<dbReference type="InterPro" id="IPR016153">
    <property type="entry name" value="Heat_shock_Hsp33_N"/>
</dbReference>
<dbReference type="NCBIfam" id="NF001033">
    <property type="entry name" value="PRK00114.1"/>
    <property type="match status" value="1"/>
</dbReference>
<dbReference type="PANTHER" id="PTHR30111">
    <property type="entry name" value="33 KDA CHAPERONIN"/>
    <property type="match status" value="1"/>
</dbReference>
<dbReference type="PANTHER" id="PTHR30111:SF1">
    <property type="entry name" value="33 KDA CHAPERONIN"/>
    <property type="match status" value="1"/>
</dbReference>
<dbReference type="Pfam" id="PF01430">
    <property type="entry name" value="HSP33"/>
    <property type="match status" value="1"/>
</dbReference>
<dbReference type="PIRSF" id="PIRSF005261">
    <property type="entry name" value="Heat_shock_Hsp33"/>
    <property type="match status" value="1"/>
</dbReference>
<dbReference type="SUPFAM" id="SSF64397">
    <property type="entry name" value="Hsp33 domain"/>
    <property type="match status" value="1"/>
</dbReference>
<dbReference type="SUPFAM" id="SSF118352">
    <property type="entry name" value="HSP33 redox switch-like"/>
    <property type="match status" value="1"/>
</dbReference>
<sequence>MDKIIKSISKNGHFRAFALDSTLTVKEAQERHQTWPTSTVALGRTLIAGQILGANEKGDTKITVKVLGDGAMGPIIAVADSRGHVKGYVKNRKLDYKKASTGEVLVAPFVGNGFLVVVKDMGLKQPYSGQVDLITGEIGEDLAWYFLSSEQTPSSVGVNVLLNEDSDTVKIAGGFMLQALPDATDEEITEIEHNIKSMPSIATMLTSEEPLKTMLDNIYGDMEYKNLGEFPLEFKCDCSKERFLEGIKSLGREPIEEMIAEDHGAEIICQFCENKYEYSEDELKALLK</sequence>
<evidence type="ECO:0000255" key="1">
    <source>
        <dbReference type="HAMAP-Rule" id="MF_00117"/>
    </source>
</evidence>
<evidence type="ECO:0000305" key="2"/>
<comment type="function">
    <text evidence="1">Redox regulated molecular chaperone. Protects both thermally unfolding and oxidatively damaged proteins from irreversible aggregation. Plays an important role in the bacterial defense system toward oxidative stress.</text>
</comment>
<comment type="subcellular location">
    <subcellularLocation>
        <location evidence="1">Cytoplasm</location>
    </subcellularLocation>
</comment>
<comment type="PTM">
    <text evidence="1">Under oxidizing conditions two disulfide bonds are formed involving the reactive cysteines. Under reducing conditions zinc is bound to the reactive cysteines and the protein is inactive.</text>
</comment>
<comment type="similarity">
    <text evidence="1">Belongs to the HSP33 family.</text>
</comment>
<comment type="sequence caution" evidence="2">
    <conflict type="erroneous initiation">
        <sequence resource="EMBL-CDS" id="AAK06057"/>
    </conflict>
</comment>
<organism>
    <name type="scientific">Lactococcus lactis subsp. lactis (strain IL1403)</name>
    <name type="common">Streptococcus lactis</name>
    <dbReference type="NCBI Taxonomy" id="272623"/>
    <lineage>
        <taxon>Bacteria</taxon>
        <taxon>Bacillati</taxon>
        <taxon>Bacillota</taxon>
        <taxon>Bacilli</taxon>
        <taxon>Lactobacillales</taxon>
        <taxon>Streptococcaceae</taxon>
        <taxon>Lactococcus</taxon>
    </lineage>
</organism>
<name>HSLO_LACLA</name>
<reference key="1">
    <citation type="journal article" date="2001" name="Genome Res.">
        <title>The complete genome sequence of the lactic acid bacterium Lactococcus lactis ssp. lactis IL1403.</title>
        <authorList>
            <person name="Bolotin A."/>
            <person name="Wincker P."/>
            <person name="Mauger S."/>
            <person name="Jaillon O."/>
            <person name="Malarme K."/>
            <person name="Weissenbach J."/>
            <person name="Ehrlich S.D."/>
            <person name="Sorokin A."/>
        </authorList>
    </citation>
    <scope>NUCLEOTIDE SEQUENCE [LARGE SCALE GENOMIC DNA]</scope>
    <source>
        <strain>IL1403</strain>
    </source>
</reference>
<feature type="chain" id="PRO_0000192181" description="33 kDa chaperonin">
    <location>
        <begin position="1"/>
        <end position="288"/>
    </location>
</feature>
<feature type="disulfide bond" description="Redox-active" evidence="1">
    <location>
        <begin position="236"/>
        <end position="238"/>
    </location>
</feature>
<feature type="disulfide bond" description="Redox-active" evidence="1">
    <location>
        <begin position="269"/>
        <end position="272"/>
    </location>
</feature>
<keyword id="KW-0143">Chaperone</keyword>
<keyword id="KW-0963">Cytoplasm</keyword>
<keyword id="KW-1015">Disulfide bond</keyword>
<keyword id="KW-0676">Redox-active center</keyword>
<keyword id="KW-1185">Reference proteome</keyword>
<keyword id="KW-0862">Zinc</keyword>
<proteinExistence type="inferred from homology"/>